<organism evidence="9">
    <name type="scientific">Canavalia boliviana</name>
    <dbReference type="NCBI Taxonomy" id="232300"/>
    <lineage>
        <taxon>Eukaryota</taxon>
        <taxon>Viridiplantae</taxon>
        <taxon>Streptophyta</taxon>
        <taxon>Embryophyta</taxon>
        <taxon>Tracheophyta</taxon>
        <taxon>Spermatophyta</taxon>
        <taxon>Magnoliopsida</taxon>
        <taxon>eudicotyledons</taxon>
        <taxon>Gunneridae</taxon>
        <taxon>Pentapetalae</taxon>
        <taxon>rosids</taxon>
        <taxon>fabids</taxon>
        <taxon>Fabales</taxon>
        <taxon>Fabaceae</taxon>
        <taxon>Papilionoideae</taxon>
        <taxon>50 kb inversion clade</taxon>
        <taxon>NPAAA clade</taxon>
        <taxon>indigoferoid/millettioid clade</taxon>
        <taxon>Phaseoleae</taxon>
        <taxon>Canavalia</taxon>
    </lineage>
</organism>
<evidence type="ECO:0000250" key="1">
    <source>
        <dbReference type="UniProtKB" id="P86624"/>
    </source>
</evidence>
<evidence type="ECO:0000269" key="2">
    <source>
    </source>
</evidence>
<evidence type="ECO:0000269" key="3">
    <source>
    </source>
</evidence>
<evidence type="ECO:0000303" key="4">
    <source>
    </source>
</evidence>
<evidence type="ECO:0000303" key="5">
    <source>
    </source>
</evidence>
<evidence type="ECO:0000305" key="6"/>
<evidence type="ECO:0000312" key="7">
    <source>
        <dbReference type="PDB" id="4K1Y"/>
    </source>
</evidence>
<evidence type="ECO:0000312" key="8">
    <source>
        <dbReference type="PDB" id="4K1Z"/>
    </source>
</evidence>
<evidence type="ECO:0000312" key="9">
    <source>
        <dbReference type="PDB" id="4K20"/>
    </source>
</evidence>
<evidence type="ECO:0000312" key="10">
    <source>
        <dbReference type="PDB" id="4K21"/>
    </source>
</evidence>
<evidence type="ECO:0007829" key="11">
    <source>
        <dbReference type="PDB" id="4K1Y"/>
    </source>
</evidence>
<evidence type="ECO:0007829" key="12">
    <source>
        <dbReference type="PDB" id="4K1Z"/>
    </source>
</evidence>
<evidence type="ECO:0007829" key="13">
    <source>
        <dbReference type="PDB" id="4K21"/>
    </source>
</evidence>
<dbReference type="PDB" id="4K1Y">
    <property type="method" value="X-ray"/>
    <property type="resolution" value="2.50 A"/>
    <property type="chains" value="A/B/C/D=1-237"/>
</dbReference>
<dbReference type="PDB" id="4K1Z">
    <property type="method" value="X-ray"/>
    <property type="resolution" value="2.30 A"/>
    <property type="chains" value="A/B/C/D=1-237"/>
</dbReference>
<dbReference type="PDB" id="4K20">
    <property type="method" value="X-ray"/>
    <property type="resolution" value="3.40 A"/>
    <property type="chains" value="A/B=1-237"/>
</dbReference>
<dbReference type="PDB" id="4K21">
    <property type="method" value="X-ray"/>
    <property type="resolution" value="1.60 A"/>
    <property type="chains" value="A=1-237"/>
</dbReference>
<dbReference type="PDBsum" id="4K1Y"/>
<dbReference type="PDBsum" id="4K1Z"/>
<dbReference type="PDBsum" id="4K20"/>
<dbReference type="PDBsum" id="4K21"/>
<dbReference type="SMR" id="A0A023GPI8"/>
<dbReference type="UniLectin" id="A0A023GPI8"/>
<dbReference type="EvolutionaryTrace" id="A0A023GPI8"/>
<dbReference type="GO" id="GO:0005537">
    <property type="term" value="F:D-mannose binding"/>
    <property type="evidence" value="ECO:0007669"/>
    <property type="project" value="UniProtKB-KW"/>
</dbReference>
<dbReference type="GO" id="GO:0046872">
    <property type="term" value="F:metal ion binding"/>
    <property type="evidence" value="ECO:0007669"/>
    <property type="project" value="UniProtKB-KW"/>
</dbReference>
<dbReference type="CDD" id="cd06899">
    <property type="entry name" value="lectin_legume_LecRK_Arcelin_ConA"/>
    <property type="match status" value="1"/>
</dbReference>
<dbReference type="FunFam" id="2.60.120.200:FF:000227">
    <property type="entry name" value="Concanavalin-A"/>
    <property type="match status" value="1"/>
</dbReference>
<dbReference type="Gene3D" id="2.60.120.200">
    <property type="match status" value="1"/>
</dbReference>
<dbReference type="InterPro" id="IPR013320">
    <property type="entry name" value="ConA-like_dom_sf"/>
</dbReference>
<dbReference type="InterPro" id="IPR000985">
    <property type="entry name" value="Lectin_LegA_CS"/>
</dbReference>
<dbReference type="InterPro" id="IPR019825">
    <property type="entry name" value="Lectin_legB_Mn/Ca_BS"/>
</dbReference>
<dbReference type="InterPro" id="IPR001220">
    <property type="entry name" value="Legume_lectin_dom"/>
</dbReference>
<dbReference type="InterPro" id="IPR050258">
    <property type="entry name" value="Leguminous_Lectin"/>
</dbReference>
<dbReference type="PANTHER" id="PTHR32401">
    <property type="entry name" value="CONCANAVALIN A-LIKE LECTIN FAMILY PROTEIN"/>
    <property type="match status" value="1"/>
</dbReference>
<dbReference type="PANTHER" id="PTHR32401:SF47">
    <property type="entry name" value="LEGUME LECTIN DOMAIN-CONTAINING PROTEIN"/>
    <property type="match status" value="1"/>
</dbReference>
<dbReference type="Pfam" id="PF00139">
    <property type="entry name" value="Lectin_legB"/>
    <property type="match status" value="2"/>
</dbReference>
<dbReference type="SUPFAM" id="SSF49899">
    <property type="entry name" value="Concanavalin A-like lectins/glucanases"/>
    <property type="match status" value="1"/>
</dbReference>
<dbReference type="PROSITE" id="PS00308">
    <property type="entry name" value="LECTIN_LEGUME_ALPHA"/>
    <property type="match status" value="1"/>
</dbReference>
<dbReference type="PROSITE" id="PS00307">
    <property type="entry name" value="LECTIN_LEGUME_BETA"/>
    <property type="match status" value="1"/>
</dbReference>
<keyword id="KW-0002">3D-structure</keyword>
<keyword id="KW-0106">Calcium</keyword>
<keyword id="KW-0903">Direct protein sequencing</keyword>
<keyword id="KW-0430">Lectin</keyword>
<keyword id="KW-0464">Manganese</keyword>
<keyword id="KW-0465">Mannose-binding</keyword>
<keyword id="KW-0479">Metal-binding</keyword>
<protein>
    <recommendedName>
        <fullName evidence="5">Lectin alpha chain</fullName>
        <shortName evidence="4 5">CboL</shortName>
    </recommendedName>
    <component>
        <recommendedName>
            <fullName evidence="5">Lectin beta chain</fullName>
        </recommendedName>
    </component>
    <component>
        <recommendedName>
            <fullName evidence="5">Lectin gamma chain</fullName>
        </recommendedName>
    </component>
</protein>
<accession>A0A023GPI8</accession>
<accession>P86474</accession>
<comment type="function">
    <text evidence="2 3">D-mannose/D-glucose-binding lectin (PubMed:24865454). Has anti-inflammatory activity in animal models when applied intravenously (PubMed:24865454). Has antinociceptive activity in mice when applied intravenously (PubMed:19705102).</text>
</comment>
<comment type="subunit">
    <text evidence="3">Homodimer and homotetramer. Oligomerization is pH-dependent with homotetramers forming at pH 4 and above.</text>
</comment>
<comment type="mass spectrometry" mass="25572.0" error="2.0" method="Electrospray" evidence="3">
    <molecule>Lectin alpha chain</molecule>
    <text>Alpha chain.</text>
</comment>
<comment type="mass spectrometry" mass="12878.0" error="1.0" method="Electrospray" evidence="3">
    <molecule>Lectin beta chain</molecule>
    <text>Beta chain.</text>
</comment>
<comment type="mass spectrometry" mass="12710.0" error="1.0" method="Electrospray" evidence="3">
    <molecule>Lectin gamma chain</molecule>
    <text>Gamma chain.</text>
</comment>
<comment type="miscellaneous">
    <text evidence="3">Binds one manganese (or another transition metal) ion and one calcium ion. The metal ions are essential for the saccharide-binding and cell-agglutinating activities.</text>
</comment>
<comment type="similarity">
    <text evidence="6">Belongs to the leguminous lectin family.</text>
</comment>
<reference evidence="7 8 10" key="1">
    <citation type="journal article" date="2014" name="PLoS ONE">
        <title>Structural studies of an anti-inflammatory lectin from Canavalia boliviana seeds in complex with dimannosides.</title>
        <authorList>
            <person name="Bezerra G.A."/>
            <person name="Viertlmayr R."/>
            <person name="Moura T.R."/>
            <person name="Delatorre P."/>
            <person name="Rocha B.A."/>
            <person name="do Nascimento K.S."/>
            <person name="Figueiredo J.G."/>
            <person name="Bezerra I.G."/>
            <person name="Teixeira C.S."/>
            <person name="Simoes R.C."/>
            <person name="Nagano C.S."/>
            <person name="de Alencar N.M."/>
            <person name="Gruber K."/>
            <person name="Cavada B.S."/>
        </authorList>
    </citation>
    <scope>PROTEIN SEQUENCE</scope>
    <scope>X-RAY CRYSTALLOGRAPHY (1.60 ANGSTROMS) IN COMPLEX WITH CARBOHYDRATE; CALCIUM AND MANGANESE</scope>
    <scope>FUNCTION</scope>
    <scope>SUBUNIT</scope>
    <scope>MASS SPECTROMETRY</scope>
    <scope>IDENTIFICATION BY MASS SPECTROMETRY</scope>
    <source>
        <tissue evidence="5">Seed</tissue>
    </source>
</reference>
<reference evidence="6" key="2">
    <citation type="journal article" date="2009" name="Naunyn Schmiedebergs Arch. Pharmacol.">
        <title>Antinociceptive activity and toxicology of the lectin from Canavalia boliviana seeds in mice.</title>
        <authorList>
            <person name="Figueiredo J.G."/>
            <person name="da Silveira Bitencourt F."/>
            <person name="Beserra I.G."/>
            <person name="Teixeira C.S."/>
            <person name="Luz P.B."/>
            <person name="Bezerra E.H."/>
            <person name="Mota M.R."/>
            <person name="Assreuy A.M."/>
            <person name="de Queiroz Cunha F."/>
            <person name="Cavada B.S."/>
            <person name="de Alencar N.M."/>
        </authorList>
    </citation>
    <scope>FUNCTION</scope>
</reference>
<feature type="chain" id="PRO_0000436146" description="Lectin alpha chain" evidence="3">
    <location>
        <begin position="1"/>
        <end position="237"/>
    </location>
</feature>
<feature type="chain" id="PRO_0000436147" description="Lectin beta chain" evidence="3">
    <location>
        <begin position="1"/>
        <end position="118"/>
    </location>
</feature>
<feature type="chain" id="PRO_0000436148" description="Lectin gamma chain" evidence="3">
    <location>
        <begin position="119"/>
        <end position="237"/>
    </location>
</feature>
<feature type="binding site" evidence="3">
    <location>
        <position position="8"/>
    </location>
    <ligand>
        <name>Mn(2+)</name>
        <dbReference type="ChEBI" id="CHEBI:29035"/>
    </ligand>
</feature>
<feature type="binding site" evidence="3">
    <location>
        <position position="10"/>
    </location>
    <ligand>
        <name>Ca(2+)</name>
        <dbReference type="ChEBI" id="CHEBI:29108"/>
    </ligand>
</feature>
<feature type="binding site" evidence="3">
    <location>
        <position position="10"/>
    </location>
    <ligand>
        <name>Mn(2+)</name>
        <dbReference type="ChEBI" id="CHEBI:29035"/>
    </ligand>
</feature>
<feature type="binding site" evidence="3">
    <location>
        <position position="12"/>
    </location>
    <ligand>
        <name>a carbohydrate</name>
        <dbReference type="ChEBI" id="CHEBI:16646"/>
    </ligand>
</feature>
<feature type="binding site" evidence="3">
    <location>
        <position position="12"/>
    </location>
    <ligand>
        <name>Ca(2+)</name>
        <dbReference type="ChEBI" id="CHEBI:29108"/>
    </ligand>
</feature>
<feature type="binding site" evidence="3">
    <location>
        <position position="14"/>
    </location>
    <ligand>
        <name>a carbohydrate</name>
        <dbReference type="ChEBI" id="CHEBI:16646"/>
    </ligand>
</feature>
<feature type="binding site" evidence="3">
    <location>
        <position position="14"/>
    </location>
    <ligand>
        <name>Ca(2+)</name>
        <dbReference type="ChEBI" id="CHEBI:29108"/>
    </ligand>
</feature>
<feature type="binding site" evidence="3">
    <location>
        <position position="19"/>
    </location>
    <ligand>
        <name>Ca(2+)</name>
        <dbReference type="ChEBI" id="CHEBI:29108"/>
    </ligand>
</feature>
<feature type="binding site" evidence="3">
    <location>
        <position position="19"/>
    </location>
    <ligand>
        <name>Mn(2+)</name>
        <dbReference type="ChEBI" id="CHEBI:29035"/>
    </ligand>
</feature>
<feature type="binding site" evidence="3">
    <location>
        <position position="24"/>
    </location>
    <ligand>
        <name>Mn(2+)</name>
        <dbReference type="ChEBI" id="CHEBI:29035"/>
    </ligand>
</feature>
<feature type="binding site" evidence="3">
    <location>
        <begin position="99"/>
        <end position="100"/>
    </location>
    <ligand>
        <name>a carbohydrate</name>
        <dbReference type="ChEBI" id="CHEBI:16646"/>
    </ligand>
</feature>
<feature type="binding site" evidence="1">
    <location>
        <position position="208"/>
    </location>
    <ligand>
        <name>Ca(2+)</name>
        <dbReference type="ChEBI" id="CHEBI:29108"/>
    </ligand>
</feature>
<feature type="binding site" evidence="1">
    <location>
        <position position="228"/>
    </location>
    <ligand>
        <name>a carbohydrate</name>
        <dbReference type="ChEBI" id="CHEBI:16646"/>
    </ligand>
</feature>
<feature type="strand" evidence="13">
    <location>
        <begin position="4"/>
        <end position="10"/>
    </location>
</feature>
<feature type="helix" evidence="13">
    <location>
        <begin position="15"/>
        <end position="17"/>
    </location>
</feature>
<feature type="strand" evidence="13">
    <location>
        <begin position="24"/>
        <end position="33"/>
    </location>
</feature>
<feature type="strand" evidence="13">
    <location>
        <begin position="35"/>
        <end position="39"/>
    </location>
</feature>
<feature type="strand" evidence="13">
    <location>
        <begin position="46"/>
        <end position="55"/>
    </location>
</feature>
<feature type="turn" evidence="13">
    <location>
        <begin position="56"/>
        <end position="59"/>
    </location>
</feature>
<feature type="strand" evidence="13">
    <location>
        <begin position="60"/>
        <end position="66"/>
    </location>
</feature>
<feature type="strand" evidence="13">
    <location>
        <begin position="72"/>
        <end position="78"/>
    </location>
</feature>
<feature type="helix" evidence="13">
    <location>
        <begin position="81"/>
        <end position="83"/>
    </location>
</feature>
<feature type="strand" evidence="13">
    <location>
        <begin position="87"/>
        <end position="96"/>
    </location>
</feature>
<feature type="strand" evidence="13">
    <location>
        <begin position="98"/>
        <end position="100"/>
    </location>
</feature>
<feature type="strand" evidence="13">
    <location>
        <begin position="105"/>
        <end position="119"/>
    </location>
</feature>
<feature type="strand" evidence="13">
    <location>
        <begin position="123"/>
        <end position="131"/>
    </location>
</feature>
<feature type="strand" evidence="13">
    <location>
        <begin position="140"/>
        <end position="144"/>
    </location>
</feature>
<feature type="helix" evidence="13">
    <location>
        <begin position="150"/>
        <end position="152"/>
    </location>
</feature>
<feature type="strand" evidence="11">
    <location>
        <begin position="154"/>
        <end position="157"/>
    </location>
</feature>
<feature type="strand" evidence="11">
    <location>
        <begin position="161"/>
        <end position="163"/>
    </location>
</feature>
<feature type="strand" evidence="13">
    <location>
        <begin position="170"/>
        <end position="177"/>
    </location>
</feature>
<feature type="strand" evidence="13">
    <location>
        <begin position="186"/>
        <end position="198"/>
    </location>
</feature>
<feature type="strand" evidence="12">
    <location>
        <begin position="203"/>
        <end position="205"/>
    </location>
</feature>
<feature type="strand" evidence="13">
    <location>
        <begin position="209"/>
        <end position="215"/>
    </location>
</feature>
<feature type="helix" evidence="13">
    <location>
        <begin position="227"/>
        <end position="229"/>
    </location>
</feature>
<feature type="turn" evidence="13">
    <location>
        <begin position="230"/>
        <end position="232"/>
    </location>
</feature>
<name>LECA_CANBL</name>
<sequence length="237" mass="25571">ADTIVAVELDTYPNTDIGDPSYPHIGIDIKSVRSKKTAKWNMQNGKVGTAHIIYNSVGKRLSAVVSYPNGDSATVSYDVDLDNVLPEWVRVGLSATTGLYKETNTILSWSFTSKLKSNSTHETNALHFMFNQFSKDQKDLILQGDATTGRDGNLELTRVSSNGSPQGSSVGRALFYAPVHIWESSAVVASFDATFTFLIKSSDSHPADGIAFFISNIDSSIPSGSTGRLLGLFPDAN</sequence>
<proteinExistence type="evidence at protein level"/>